<feature type="chain" id="PRO_0000346307" description="D-ribose pyranase">
    <location>
        <begin position="1"/>
        <end position="139"/>
    </location>
</feature>
<feature type="active site" description="Proton donor" evidence="1">
    <location>
        <position position="20"/>
    </location>
</feature>
<feature type="binding site" evidence="1">
    <location>
        <position position="28"/>
    </location>
    <ligand>
        <name>substrate</name>
    </ligand>
</feature>
<feature type="binding site" evidence="1">
    <location>
        <position position="106"/>
    </location>
    <ligand>
        <name>substrate</name>
    </ligand>
</feature>
<feature type="binding site" evidence="1">
    <location>
        <begin position="128"/>
        <end position="130"/>
    </location>
    <ligand>
        <name>substrate</name>
    </ligand>
</feature>
<reference key="1">
    <citation type="submission" date="2008-04" db="EMBL/GenBank/DDBJ databases">
        <title>Complete sequence of Yersinia pseudotuberculosis PB1/+.</title>
        <authorList>
            <person name="Copeland A."/>
            <person name="Lucas S."/>
            <person name="Lapidus A."/>
            <person name="Glavina del Rio T."/>
            <person name="Dalin E."/>
            <person name="Tice H."/>
            <person name="Bruce D."/>
            <person name="Goodwin L."/>
            <person name="Pitluck S."/>
            <person name="Munk A.C."/>
            <person name="Brettin T."/>
            <person name="Detter J.C."/>
            <person name="Han C."/>
            <person name="Tapia R."/>
            <person name="Schmutz J."/>
            <person name="Larimer F."/>
            <person name="Land M."/>
            <person name="Hauser L."/>
            <person name="Challacombe J.F."/>
            <person name="Green L."/>
            <person name="Lindler L.E."/>
            <person name="Nikolich M.P."/>
            <person name="Richardson P."/>
        </authorList>
    </citation>
    <scope>NUCLEOTIDE SEQUENCE [LARGE SCALE GENOMIC DNA]</scope>
    <source>
        <strain>PB1/+</strain>
    </source>
</reference>
<gene>
    <name evidence="1" type="primary">rbsD</name>
    <name type="ordered locus">YPTS_4164</name>
</gene>
<name>RBSD_YERPB</name>
<protein>
    <recommendedName>
        <fullName evidence="1">D-ribose pyranase</fullName>
        <ecNumber evidence="1">5.4.99.62</ecNumber>
    </recommendedName>
</protein>
<evidence type="ECO:0000255" key="1">
    <source>
        <dbReference type="HAMAP-Rule" id="MF_01661"/>
    </source>
</evidence>
<proteinExistence type="inferred from homology"/>
<keyword id="KW-0119">Carbohydrate metabolism</keyword>
<keyword id="KW-0963">Cytoplasm</keyword>
<keyword id="KW-0413">Isomerase</keyword>
<comment type="function">
    <text evidence="1">Catalyzes the interconversion of beta-pyran and beta-furan forms of D-ribose.</text>
</comment>
<comment type="catalytic activity">
    <reaction evidence="1">
        <text>beta-D-ribopyranose = beta-D-ribofuranose</text>
        <dbReference type="Rhea" id="RHEA:25432"/>
        <dbReference type="ChEBI" id="CHEBI:27476"/>
        <dbReference type="ChEBI" id="CHEBI:47002"/>
        <dbReference type="EC" id="5.4.99.62"/>
    </reaction>
</comment>
<comment type="pathway">
    <text evidence="1">Carbohydrate metabolism; D-ribose degradation; D-ribose 5-phosphate from beta-D-ribopyranose: step 1/2.</text>
</comment>
<comment type="subunit">
    <text evidence="1">Homodecamer.</text>
</comment>
<comment type="subcellular location">
    <subcellularLocation>
        <location evidence="1">Cytoplasm</location>
    </subcellularLocation>
</comment>
<comment type="similarity">
    <text evidence="1">Belongs to the RbsD / FucU family. RbsD subfamily.</text>
</comment>
<organism>
    <name type="scientific">Yersinia pseudotuberculosis serotype IB (strain PB1/+)</name>
    <dbReference type="NCBI Taxonomy" id="502801"/>
    <lineage>
        <taxon>Bacteria</taxon>
        <taxon>Pseudomonadati</taxon>
        <taxon>Pseudomonadota</taxon>
        <taxon>Gammaproteobacteria</taxon>
        <taxon>Enterobacterales</taxon>
        <taxon>Yersiniaceae</taxon>
        <taxon>Yersinia</taxon>
    </lineage>
</organism>
<accession>B2K7I5</accession>
<sequence length="139" mass="15234">MKKGVLLNADISAVISRLGHTDQIVIGDAGLPIPATTTRIDLALTRGVPGFLQVVDVVTQEMQVENAYLAEEIVKNNPQLHEALLVLLTQLEQRQENQIALRYISHEAFKEQTKQSRAVIRSGECSPFANIILGSGVTF</sequence>
<dbReference type="EC" id="5.4.99.62" evidence="1"/>
<dbReference type="EMBL" id="CP001048">
    <property type="protein sequence ID" value="ACC91107.1"/>
    <property type="molecule type" value="Genomic_DNA"/>
</dbReference>
<dbReference type="RefSeq" id="WP_002212252.1">
    <property type="nucleotide sequence ID" value="NZ_CP009780.1"/>
</dbReference>
<dbReference type="SMR" id="B2K7I5"/>
<dbReference type="GeneID" id="57974587"/>
<dbReference type="KEGG" id="ypb:YPTS_4164"/>
<dbReference type="PATRIC" id="fig|502801.10.peg.3635"/>
<dbReference type="UniPathway" id="UPA00916">
    <property type="reaction ID" value="UER00888"/>
</dbReference>
<dbReference type="GO" id="GO:0005829">
    <property type="term" value="C:cytosol"/>
    <property type="evidence" value="ECO:0007669"/>
    <property type="project" value="TreeGrafter"/>
</dbReference>
<dbReference type="GO" id="GO:0062193">
    <property type="term" value="F:D-ribose pyranase activity"/>
    <property type="evidence" value="ECO:0007669"/>
    <property type="project" value="UniProtKB-EC"/>
</dbReference>
<dbReference type="GO" id="GO:0016872">
    <property type="term" value="F:intramolecular lyase activity"/>
    <property type="evidence" value="ECO:0007669"/>
    <property type="project" value="UniProtKB-UniRule"/>
</dbReference>
<dbReference type="GO" id="GO:0048029">
    <property type="term" value="F:monosaccharide binding"/>
    <property type="evidence" value="ECO:0007669"/>
    <property type="project" value="InterPro"/>
</dbReference>
<dbReference type="GO" id="GO:0019303">
    <property type="term" value="P:D-ribose catabolic process"/>
    <property type="evidence" value="ECO:0007669"/>
    <property type="project" value="UniProtKB-UniRule"/>
</dbReference>
<dbReference type="FunFam" id="3.40.1650.10:FF:000002">
    <property type="entry name" value="D-ribose pyranase"/>
    <property type="match status" value="1"/>
</dbReference>
<dbReference type="Gene3D" id="3.40.1650.10">
    <property type="entry name" value="RbsD-like domain"/>
    <property type="match status" value="1"/>
</dbReference>
<dbReference type="HAMAP" id="MF_01661">
    <property type="entry name" value="D_rib_pyranase"/>
    <property type="match status" value="1"/>
</dbReference>
<dbReference type="InterPro" id="IPR023064">
    <property type="entry name" value="D-ribose_pyranase"/>
</dbReference>
<dbReference type="InterPro" id="IPR023750">
    <property type="entry name" value="RbsD-like_sf"/>
</dbReference>
<dbReference type="InterPro" id="IPR007721">
    <property type="entry name" value="RbsD_FucU"/>
</dbReference>
<dbReference type="NCBIfam" id="NF008761">
    <property type="entry name" value="PRK11797.1"/>
    <property type="match status" value="1"/>
</dbReference>
<dbReference type="PANTHER" id="PTHR37831">
    <property type="entry name" value="D-RIBOSE PYRANASE"/>
    <property type="match status" value="1"/>
</dbReference>
<dbReference type="PANTHER" id="PTHR37831:SF1">
    <property type="entry name" value="D-RIBOSE PYRANASE"/>
    <property type="match status" value="1"/>
</dbReference>
<dbReference type="Pfam" id="PF05025">
    <property type="entry name" value="RbsD_FucU"/>
    <property type="match status" value="1"/>
</dbReference>
<dbReference type="SUPFAM" id="SSF102546">
    <property type="entry name" value="RbsD-like"/>
    <property type="match status" value="1"/>
</dbReference>